<dbReference type="EC" id="4.1.3.17"/>
<dbReference type="EC" id="4.1.1.112"/>
<dbReference type="EMBL" id="CP000518">
    <property type="protein sequence ID" value="ABL94333.1"/>
    <property type="molecule type" value="Genomic_DNA"/>
</dbReference>
<dbReference type="SMR" id="A1UNC5"/>
<dbReference type="STRING" id="189918.Mkms_5144"/>
<dbReference type="KEGG" id="mkm:Mkms_5144"/>
<dbReference type="HOGENOM" id="CLU_072626_4_0_11"/>
<dbReference type="OrthoDB" id="943692at2"/>
<dbReference type="GO" id="GO:0047443">
    <property type="term" value="F:4-hydroxy-4-methyl-2-oxoglutarate aldolase activity"/>
    <property type="evidence" value="ECO:0007669"/>
    <property type="project" value="UniProtKB-EC"/>
</dbReference>
<dbReference type="GO" id="GO:0046872">
    <property type="term" value="F:metal ion binding"/>
    <property type="evidence" value="ECO:0007669"/>
    <property type="project" value="UniProtKB-KW"/>
</dbReference>
<dbReference type="GO" id="GO:0008948">
    <property type="term" value="F:oxaloacetate decarboxylase activity"/>
    <property type="evidence" value="ECO:0007669"/>
    <property type="project" value="UniProtKB-EC"/>
</dbReference>
<dbReference type="GO" id="GO:0008428">
    <property type="term" value="F:ribonuclease inhibitor activity"/>
    <property type="evidence" value="ECO:0007669"/>
    <property type="project" value="InterPro"/>
</dbReference>
<dbReference type="GO" id="GO:0051252">
    <property type="term" value="P:regulation of RNA metabolic process"/>
    <property type="evidence" value="ECO:0007669"/>
    <property type="project" value="InterPro"/>
</dbReference>
<dbReference type="CDD" id="cd16841">
    <property type="entry name" value="RraA_family"/>
    <property type="match status" value="1"/>
</dbReference>
<dbReference type="Gene3D" id="3.50.30.40">
    <property type="entry name" value="Ribonuclease E inhibitor RraA/RraA-like"/>
    <property type="match status" value="1"/>
</dbReference>
<dbReference type="InterPro" id="IPR010203">
    <property type="entry name" value="RraA"/>
</dbReference>
<dbReference type="InterPro" id="IPR005493">
    <property type="entry name" value="RraA/RraA-like"/>
</dbReference>
<dbReference type="InterPro" id="IPR036704">
    <property type="entry name" value="RraA/RraA-like_sf"/>
</dbReference>
<dbReference type="NCBIfam" id="TIGR01935">
    <property type="entry name" value="NOT-MenG"/>
    <property type="match status" value="1"/>
</dbReference>
<dbReference type="NCBIfam" id="NF006875">
    <property type="entry name" value="PRK09372.1"/>
    <property type="match status" value="1"/>
</dbReference>
<dbReference type="PANTHER" id="PTHR33254">
    <property type="entry name" value="4-HYDROXY-4-METHYL-2-OXOGLUTARATE ALDOLASE 3-RELATED"/>
    <property type="match status" value="1"/>
</dbReference>
<dbReference type="PANTHER" id="PTHR33254:SF4">
    <property type="entry name" value="4-HYDROXY-4-METHYL-2-OXOGLUTARATE ALDOLASE 3-RELATED"/>
    <property type="match status" value="1"/>
</dbReference>
<dbReference type="Pfam" id="PF03737">
    <property type="entry name" value="RraA-like"/>
    <property type="match status" value="1"/>
</dbReference>
<dbReference type="SUPFAM" id="SSF89562">
    <property type="entry name" value="RraA-like"/>
    <property type="match status" value="1"/>
</dbReference>
<evidence type="ECO:0000250" key="1"/>
<evidence type="ECO:0000305" key="2"/>
<feature type="chain" id="PRO_1000013851" description="Putative 4-hydroxy-4-methyl-2-oxoglutarate aldolase">
    <location>
        <begin position="1"/>
        <end position="159"/>
    </location>
</feature>
<feature type="binding site" evidence="1">
    <location>
        <begin position="78"/>
        <end position="81"/>
    </location>
    <ligand>
        <name>substrate</name>
    </ligand>
</feature>
<feature type="binding site" evidence="1">
    <location>
        <position position="100"/>
    </location>
    <ligand>
        <name>substrate</name>
    </ligand>
</feature>
<feature type="binding site" evidence="1">
    <location>
        <position position="101"/>
    </location>
    <ligand>
        <name>a divalent metal cation</name>
        <dbReference type="ChEBI" id="CHEBI:60240"/>
    </ligand>
</feature>
<name>RRAAH_MYCSK</name>
<reference key="1">
    <citation type="submission" date="2006-12" db="EMBL/GenBank/DDBJ databases">
        <title>Complete sequence of chromosome of Mycobacterium sp. KMS.</title>
        <authorList>
            <consortium name="US DOE Joint Genome Institute"/>
            <person name="Copeland A."/>
            <person name="Lucas S."/>
            <person name="Lapidus A."/>
            <person name="Barry K."/>
            <person name="Detter J.C."/>
            <person name="Glavina del Rio T."/>
            <person name="Hammon N."/>
            <person name="Israni S."/>
            <person name="Dalin E."/>
            <person name="Tice H."/>
            <person name="Pitluck S."/>
            <person name="Kiss H."/>
            <person name="Brettin T."/>
            <person name="Bruce D."/>
            <person name="Han C."/>
            <person name="Tapia R."/>
            <person name="Gilna P."/>
            <person name="Schmutz J."/>
            <person name="Larimer F."/>
            <person name="Land M."/>
            <person name="Hauser L."/>
            <person name="Kyrpides N."/>
            <person name="Mikhailova N."/>
            <person name="Miller C.D."/>
            <person name="Richardson P."/>
        </authorList>
    </citation>
    <scope>NUCLEOTIDE SEQUENCE [LARGE SCALE GENOMIC DNA]</scope>
    <source>
        <strain>KMS</strain>
    </source>
</reference>
<proteinExistence type="inferred from homology"/>
<comment type="function">
    <text evidence="1">Catalyzes the aldol cleavage of 4-hydroxy-4-methyl-2-oxoglutarate (HMG) into 2 molecules of pyruvate. Also contains a secondary oxaloacetate (OAA) decarboxylase activity due to the common pyruvate enolate transition state formed following C-C bond cleavage in the retro-aldol and decarboxylation reactions (By similarity).</text>
</comment>
<comment type="catalytic activity">
    <reaction>
        <text>4-hydroxy-4-methyl-2-oxoglutarate = 2 pyruvate</text>
        <dbReference type="Rhea" id="RHEA:22748"/>
        <dbReference type="ChEBI" id="CHEBI:15361"/>
        <dbReference type="ChEBI" id="CHEBI:58276"/>
        <dbReference type="EC" id="4.1.3.17"/>
    </reaction>
</comment>
<comment type="catalytic activity">
    <reaction>
        <text>oxaloacetate + H(+) = pyruvate + CO2</text>
        <dbReference type="Rhea" id="RHEA:15641"/>
        <dbReference type="ChEBI" id="CHEBI:15361"/>
        <dbReference type="ChEBI" id="CHEBI:15378"/>
        <dbReference type="ChEBI" id="CHEBI:16452"/>
        <dbReference type="ChEBI" id="CHEBI:16526"/>
        <dbReference type="EC" id="4.1.1.112"/>
    </reaction>
</comment>
<comment type="cofactor">
    <cofactor evidence="1">
        <name>a divalent metal cation</name>
        <dbReference type="ChEBI" id="CHEBI:60240"/>
    </cofactor>
    <text evidence="1">Divalent metal cation.</text>
</comment>
<comment type="subunit">
    <text evidence="1">Homotrimer.</text>
</comment>
<comment type="similarity">
    <text evidence="2">Belongs to the class II aldolase/RraA-like family.</text>
</comment>
<accession>A1UNC5</accession>
<organism>
    <name type="scientific">Mycobacterium sp. (strain KMS)</name>
    <dbReference type="NCBI Taxonomy" id="189918"/>
    <lineage>
        <taxon>Bacteria</taxon>
        <taxon>Bacillati</taxon>
        <taxon>Actinomycetota</taxon>
        <taxon>Actinomycetes</taxon>
        <taxon>Mycobacteriales</taxon>
        <taxon>Mycobacteriaceae</taxon>
        <taxon>Mycobacterium</taxon>
    </lineage>
</organism>
<gene>
    <name type="ordered locus">Mkms_5144</name>
</gene>
<keyword id="KW-0456">Lyase</keyword>
<keyword id="KW-0479">Metal-binding</keyword>
<protein>
    <recommendedName>
        <fullName>Putative 4-hydroxy-4-methyl-2-oxoglutarate aldolase</fullName>
        <shortName>HMG aldolase</shortName>
        <ecNumber>4.1.3.17</ecNumber>
    </recommendedName>
    <alternativeName>
        <fullName>Oxaloacetate decarboxylase</fullName>
        <shortName>OAA decarboxylase</shortName>
        <ecNumber>4.1.1.112</ecNumber>
    </alternativeName>
    <alternativeName>
        <fullName>Regulator of ribonuclease activity homolog</fullName>
    </alternativeName>
    <alternativeName>
        <fullName>RraA-like protein</fullName>
    </alternativeName>
</protein>
<sequence length="159" mass="16636">MTIEPRATADLVDDIGPDVRSCDLQLRQFGRRPEFAGRVTTVRCFQDNALLKSVLSEPGDGGVLVIDGDGSLHTALVGDVIAALGRDNGWSGLIINGAVRDASTLRTLDIGIKALGTNPRKSTKTGAGERDVPVDFGGVTFTPGDVAYSDDDGIVVVTP</sequence>